<sequence>MSVKTKTITILPGDHVGTEIVNEAIKVLEAIEAATPYQKIHFDFKHHLIGGAAIDATGVPLPDDALESAKNSDAVLLGAVGGPKWGTGALRPEQGLLKIRKELNLYANIRPCNFASDSLLELSPLRPEVVKGTNLIIVRELVGGIYFGDREEQEESADKQTAWDTEKYTVDEVTRITRMAAFMALQHTPPLPIWSLDKANVLASSRLWRRTVDKVISEEFPTLSVQHQLIDSAAMILIQNPTKLNGIIITSNMFGDIISDEASVIPGSLGLLPSASLASLPDTNTAFGLYEPCHGSAPDLPANKVNPIATILSAASMLRLSLDCVKEAEALEEAVKQVLDKGIRTADLRGTSSTTEVGDAIVEAVTKILKEKA</sequence>
<organism>
    <name type="scientific">Candida maltosa</name>
    <name type="common">Yeast</name>
    <dbReference type="NCBI Taxonomy" id="5479"/>
    <lineage>
        <taxon>Eukaryota</taxon>
        <taxon>Fungi</taxon>
        <taxon>Dikarya</taxon>
        <taxon>Ascomycota</taxon>
        <taxon>Saccharomycotina</taxon>
        <taxon>Pichiomycetes</taxon>
        <taxon>Debaryomycetaceae</taxon>
        <taxon>Candida/Lodderomyces clade</taxon>
        <taxon>Candida</taxon>
    </lineage>
</organism>
<gene>
    <name type="primary">LEU2</name>
</gene>
<dbReference type="EC" id="1.1.1.85"/>
<dbReference type="EMBL" id="X05459">
    <property type="protein sequence ID" value="CAA29024.1"/>
    <property type="molecule type" value="Genomic_DNA"/>
</dbReference>
<dbReference type="EMBL" id="X72940">
    <property type="protein sequence ID" value="CAA51445.1"/>
    <property type="molecule type" value="Genomic_DNA"/>
</dbReference>
<dbReference type="PIR" id="S48228">
    <property type="entry name" value="S48228"/>
</dbReference>
<dbReference type="SMR" id="P07139"/>
<dbReference type="BRENDA" id="1.1.1.85">
    <property type="organism ID" value="1125"/>
</dbReference>
<dbReference type="UniPathway" id="UPA00048">
    <property type="reaction ID" value="UER00072"/>
</dbReference>
<dbReference type="GO" id="GO:0005829">
    <property type="term" value="C:cytosol"/>
    <property type="evidence" value="ECO:0007669"/>
    <property type="project" value="TreeGrafter"/>
</dbReference>
<dbReference type="GO" id="GO:0003862">
    <property type="term" value="F:3-isopropylmalate dehydrogenase activity"/>
    <property type="evidence" value="ECO:0007669"/>
    <property type="project" value="UniProtKB-EC"/>
</dbReference>
<dbReference type="GO" id="GO:0000287">
    <property type="term" value="F:magnesium ion binding"/>
    <property type="evidence" value="ECO:0007669"/>
    <property type="project" value="InterPro"/>
</dbReference>
<dbReference type="GO" id="GO:0051287">
    <property type="term" value="F:NAD binding"/>
    <property type="evidence" value="ECO:0007669"/>
    <property type="project" value="InterPro"/>
</dbReference>
<dbReference type="GO" id="GO:0009098">
    <property type="term" value="P:L-leucine biosynthetic process"/>
    <property type="evidence" value="ECO:0007669"/>
    <property type="project" value="UniProtKB-UniPathway"/>
</dbReference>
<dbReference type="FunFam" id="3.40.718.10:FF:000006">
    <property type="entry name" value="3-isopropylmalate dehydrogenase"/>
    <property type="match status" value="1"/>
</dbReference>
<dbReference type="Gene3D" id="3.40.718.10">
    <property type="entry name" value="Isopropylmalate Dehydrogenase"/>
    <property type="match status" value="1"/>
</dbReference>
<dbReference type="InterPro" id="IPR019818">
    <property type="entry name" value="IsoCit/isopropylmalate_DH_CS"/>
</dbReference>
<dbReference type="InterPro" id="IPR024084">
    <property type="entry name" value="IsoPropMal-DH-like_dom"/>
</dbReference>
<dbReference type="InterPro" id="IPR004429">
    <property type="entry name" value="Isopropylmalate_DH"/>
</dbReference>
<dbReference type="NCBIfam" id="TIGR00169">
    <property type="entry name" value="leuB"/>
    <property type="match status" value="1"/>
</dbReference>
<dbReference type="PANTHER" id="PTHR42979">
    <property type="entry name" value="3-ISOPROPYLMALATE DEHYDROGENASE"/>
    <property type="match status" value="1"/>
</dbReference>
<dbReference type="PANTHER" id="PTHR42979:SF1">
    <property type="entry name" value="3-ISOPROPYLMALATE DEHYDROGENASE"/>
    <property type="match status" value="1"/>
</dbReference>
<dbReference type="Pfam" id="PF00180">
    <property type="entry name" value="Iso_dh"/>
    <property type="match status" value="1"/>
</dbReference>
<dbReference type="SMART" id="SM01329">
    <property type="entry name" value="Iso_dh"/>
    <property type="match status" value="1"/>
</dbReference>
<dbReference type="SUPFAM" id="SSF53659">
    <property type="entry name" value="Isocitrate/Isopropylmalate dehydrogenase-like"/>
    <property type="match status" value="1"/>
</dbReference>
<dbReference type="PROSITE" id="PS00470">
    <property type="entry name" value="IDH_IMDH"/>
    <property type="match status" value="1"/>
</dbReference>
<accession>P07139</accession>
<protein>
    <recommendedName>
        <fullName>3-isopropylmalate dehydrogenase</fullName>
        <shortName>3-IPM-DH</shortName>
        <shortName>IMDH</shortName>
        <ecNumber>1.1.1.85</ecNumber>
    </recommendedName>
    <alternativeName>
        <fullName>Beta-IPM dehydrogenase</fullName>
    </alternativeName>
</protein>
<name>LEU3_CANMA</name>
<evidence type="ECO:0000250" key="1"/>
<evidence type="ECO:0000305" key="2"/>
<keyword id="KW-0028">Amino-acid biosynthesis</keyword>
<keyword id="KW-0100">Branched-chain amino acid biosynthesis</keyword>
<keyword id="KW-0963">Cytoplasm</keyword>
<keyword id="KW-0432">Leucine biosynthesis</keyword>
<keyword id="KW-0460">Magnesium</keyword>
<keyword id="KW-0464">Manganese</keyword>
<keyword id="KW-0479">Metal-binding</keyword>
<keyword id="KW-0520">NAD</keyword>
<keyword id="KW-0560">Oxidoreductase</keyword>
<comment type="function">
    <text>Catalyzes the oxidation of 3-carboxy-2-hydroxy-4-methylpentanoate (3-isopropylmalate) to 3-carboxy-4-methyl-2-oxopentanoate. The product decarboxylates to 4-methyl-2 oxopentanoate.</text>
</comment>
<comment type="catalytic activity">
    <reaction>
        <text>(2R,3S)-3-isopropylmalate + NAD(+) = 4-methyl-2-oxopentanoate + CO2 + NADH</text>
        <dbReference type="Rhea" id="RHEA:32271"/>
        <dbReference type="ChEBI" id="CHEBI:16526"/>
        <dbReference type="ChEBI" id="CHEBI:17865"/>
        <dbReference type="ChEBI" id="CHEBI:35121"/>
        <dbReference type="ChEBI" id="CHEBI:57540"/>
        <dbReference type="ChEBI" id="CHEBI:57945"/>
        <dbReference type="EC" id="1.1.1.85"/>
    </reaction>
</comment>
<comment type="cofactor">
    <cofactor evidence="1">
        <name>Mg(2+)</name>
        <dbReference type="ChEBI" id="CHEBI:18420"/>
    </cofactor>
    <cofactor evidence="1">
        <name>Mn(2+)</name>
        <dbReference type="ChEBI" id="CHEBI:29035"/>
    </cofactor>
    <text evidence="1">Binds 1 Mg(2+) or Mn(2+) ion per subunit.</text>
</comment>
<comment type="pathway">
    <text>Amino-acid biosynthesis; L-leucine biosynthesis; L-leucine from 3-methyl-2-oxobutanoate: step 3/4.</text>
</comment>
<comment type="subunit">
    <text evidence="1">Homodimer.</text>
</comment>
<comment type="subcellular location">
    <subcellularLocation>
        <location>Cytoplasm</location>
    </subcellularLocation>
</comment>
<comment type="similarity">
    <text evidence="2">Belongs to the isocitrate and isopropylmalate dehydrogenases family.</text>
</comment>
<reference key="1">
    <citation type="journal article" date="1987" name="Curr. Genet.">
        <title>Nucleotide sequencing analysis of a LEU gene of Candida maltosa which complements leuB mutation of Escherichia coli and leu2 mutation of Saccharomyces cerevisiae.</title>
        <authorList>
            <person name="Takagi M."/>
            <person name="Kobayashi N."/>
            <person name="Sugimoto M."/>
            <person name="Fujii T."/>
            <person name="Watari J."/>
            <person name="Yano K."/>
        </authorList>
    </citation>
    <scope>NUCLEOTIDE SEQUENCE [GENOMIC DNA]</scope>
</reference>
<reference key="2">
    <citation type="journal article" date="1994" name="Curr. Genet.">
        <title>Molecular analysis of a leu2-mutant of Candida maltosa demonstrates the presence of multiple alleles.</title>
        <authorList>
            <person name="Becher D."/>
            <person name="Schulze S."/>
            <person name="Kasuske A."/>
            <person name="Schulze H."/>
            <person name="Samsonova I.A."/>
            <person name="Oliver S.G."/>
        </authorList>
    </citation>
    <scope>NUCLEOTIDE SEQUENCE [GENOMIC DNA]</scope>
    <source>
        <strain>G587</strain>
    </source>
</reference>
<feature type="chain" id="PRO_0000083604" description="3-isopropylmalate dehydrogenase">
    <location>
        <begin position="1"/>
        <end position="373"/>
    </location>
</feature>
<feature type="binding site" evidence="1">
    <location>
        <begin position="82"/>
        <end position="93"/>
    </location>
    <ligand>
        <name>NAD(+)</name>
        <dbReference type="ChEBI" id="CHEBI:57540"/>
    </ligand>
</feature>
<feature type="binding site" evidence="1">
    <location>
        <position position="100"/>
    </location>
    <ligand>
        <name>substrate</name>
    </ligand>
</feature>
<feature type="binding site" evidence="1">
    <location>
        <position position="110"/>
    </location>
    <ligand>
        <name>substrate</name>
    </ligand>
</feature>
<feature type="binding site" evidence="1">
    <location>
        <position position="139"/>
    </location>
    <ligand>
        <name>substrate</name>
    </ligand>
</feature>
<feature type="binding site" evidence="1">
    <location>
        <position position="231"/>
    </location>
    <ligand>
        <name>Mg(2+)</name>
        <dbReference type="ChEBI" id="CHEBI:18420"/>
    </ligand>
</feature>
<feature type="binding site" evidence="1">
    <location>
        <position position="231"/>
    </location>
    <ligand>
        <name>substrate</name>
    </ligand>
</feature>
<feature type="binding site" evidence="1">
    <location>
        <position position="256"/>
    </location>
    <ligand>
        <name>Mg(2+)</name>
        <dbReference type="ChEBI" id="CHEBI:18420"/>
    </ligand>
</feature>
<feature type="binding site" evidence="1">
    <location>
        <position position="260"/>
    </location>
    <ligand>
        <name>Mg(2+)</name>
        <dbReference type="ChEBI" id="CHEBI:18420"/>
    </ligand>
</feature>
<feature type="binding site" evidence="1">
    <location>
        <begin position="295"/>
        <end position="306"/>
    </location>
    <ligand>
        <name>NAD(+)</name>
        <dbReference type="ChEBI" id="CHEBI:57540"/>
    </ligand>
</feature>
<feature type="site" description="Important for catalysis" evidence="1">
    <location>
        <position position="146"/>
    </location>
</feature>
<feature type="site" description="Important for catalysis" evidence="1">
    <location>
        <position position="198"/>
    </location>
</feature>
<proteinExistence type="inferred from homology"/>